<proteinExistence type="inferred from homology"/>
<name>CYNS_TERTT</name>
<feature type="chain" id="PRO_1000211908" description="Cyanate hydratase">
    <location>
        <begin position="1"/>
        <end position="146"/>
    </location>
</feature>
<feature type="active site" evidence="1">
    <location>
        <position position="87"/>
    </location>
</feature>
<feature type="active site" evidence="1">
    <location>
        <position position="90"/>
    </location>
</feature>
<feature type="active site" evidence="1">
    <location>
        <position position="113"/>
    </location>
</feature>
<sequence length="146" mass="16264">MKKIDVTEAIILAKKERNLTWEGIAAELGMGTVWVTSACLGMNSMPEAVAEKLCAYLELPEGAKAALMEYPTKAWDKEVPQDPLIYRLYEVVGVYGDTLKEVIQEKFGDGIMSAIDFTMDVAKEENPKGDRVVLTLNGKFLPYKAW</sequence>
<organism>
    <name type="scientific">Teredinibacter turnerae (strain ATCC 39867 / T7901)</name>
    <dbReference type="NCBI Taxonomy" id="377629"/>
    <lineage>
        <taxon>Bacteria</taxon>
        <taxon>Pseudomonadati</taxon>
        <taxon>Pseudomonadota</taxon>
        <taxon>Gammaproteobacteria</taxon>
        <taxon>Cellvibrionales</taxon>
        <taxon>Cellvibrionaceae</taxon>
        <taxon>Teredinibacter</taxon>
    </lineage>
</organism>
<gene>
    <name evidence="1" type="primary">cynS</name>
    <name type="ordered locus">TERTU_4160</name>
</gene>
<accession>C5BUK2</accession>
<comment type="function">
    <text evidence="1">Catalyzes the reaction of cyanate with bicarbonate to produce ammonia and carbon dioxide.</text>
</comment>
<comment type="catalytic activity">
    <reaction evidence="1">
        <text>cyanate + hydrogencarbonate + 3 H(+) = NH4(+) + 2 CO2</text>
        <dbReference type="Rhea" id="RHEA:11120"/>
        <dbReference type="ChEBI" id="CHEBI:15378"/>
        <dbReference type="ChEBI" id="CHEBI:16526"/>
        <dbReference type="ChEBI" id="CHEBI:17544"/>
        <dbReference type="ChEBI" id="CHEBI:28938"/>
        <dbReference type="ChEBI" id="CHEBI:29195"/>
        <dbReference type="EC" id="4.2.1.104"/>
    </reaction>
</comment>
<comment type="similarity">
    <text evidence="1">Belongs to the cyanase family.</text>
</comment>
<protein>
    <recommendedName>
        <fullName evidence="1">Cyanate hydratase</fullName>
        <shortName evidence="1">Cyanase</shortName>
        <ecNumber evidence="1">4.2.1.104</ecNumber>
    </recommendedName>
    <alternativeName>
        <fullName evidence="1">Cyanate hydrolase</fullName>
    </alternativeName>
    <alternativeName>
        <fullName evidence="1">Cyanate lyase</fullName>
    </alternativeName>
</protein>
<evidence type="ECO:0000255" key="1">
    <source>
        <dbReference type="HAMAP-Rule" id="MF_00535"/>
    </source>
</evidence>
<reference key="1">
    <citation type="journal article" date="2009" name="PLoS ONE">
        <title>The complete genome of Teredinibacter turnerae T7901: an intracellular endosymbiont of marine wood-boring bivalves (shipworms).</title>
        <authorList>
            <person name="Yang J.C."/>
            <person name="Madupu R."/>
            <person name="Durkin A.S."/>
            <person name="Ekborg N.A."/>
            <person name="Pedamallu C.S."/>
            <person name="Hostetler J.B."/>
            <person name="Radune D."/>
            <person name="Toms B.S."/>
            <person name="Henrissat B."/>
            <person name="Coutinho P.M."/>
            <person name="Schwarz S."/>
            <person name="Field L."/>
            <person name="Trindade-Silva A.E."/>
            <person name="Soares C.A.G."/>
            <person name="Elshahawi S."/>
            <person name="Hanora A."/>
            <person name="Schmidt E.W."/>
            <person name="Haygood M.G."/>
            <person name="Posfai J."/>
            <person name="Benner J."/>
            <person name="Madinger C."/>
            <person name="Nove J."/>
            <person name="Anton B."/>
            <person name="Chaudhary K."/>
            <person name="Foster J."/>
            <person name="Holman A."/>
            <person name="Kumar S."/>
            <person name="Lessard P.A."/>
            <person name="Luyten Y.A."/>
            <person name="Slatko B."/>
            <person name="Wood N."/>
            <person name="Wu B."/>
            <person name="Teplitski M."/>
            <person name="Mougous J.D."/>
            <person name="Ward N."/>
            <person name="Eisen J.A."/>
            <person name="Badger J.H."/>
            <person name="Distel D.L."/>
        </authorList>
    </citation>
    <scope>NUCLEOTIDE SEQUENCE [LARGE SCALE GENOMIC DNA]</scope>
    <source>
        <strain>ATCC 39867 / T7901</strain>
    </source>
</reference>
<keyword id="KW-0456">Lyase</keyword>
<keyword id="KW-1185">Reference proteome</keyword>
<dbReference type="EC" id="4.2.1.104" evidence="1"/>
<dbReference type="EMBL" id="CP001614">
    <property type="protein sequence ID" value="ACR11857.1"/>
    <property type="molecule type" value="Genomic_DNA"/>
</dbReference>
<dbReference type="RefSeq" id="WP_015817968.1">
    <property type="nucleotide sequence ID" value="NC_012997.1"/>
</dbReference>
<dbReference type="SMR" id="C5BUK2"/>
<dbReference type="STRING" id="377629.TERTU_4160"/>
<dbReference type="GeneID" id="58407446"/>
<dbReference type="KEGG" id="ttu:TERTU_4160"/>
<dbReference type="eggNOG" id="COG1513">
    <property type="taxonomic scope" value="Bacteria"/>
</dbReference>
<dbReference type="HOGENOM" id="CLU_103452_1_0_6"/>
<dbReference type="OrthoDB" id="9785870at2"/>
<dbReference type="Proteomes" id="UP000009080">
    <property type="component" value="Chromosome"/>
</dbReference>
<dbReference type="GO" id="GO:0008824">
    <property type="term" value="F:cyanate hydratase activity"/>
    <property type="evidence" value="ECO:0007669"/>
    <property type="project" value="UniProtKB-UniRule"/>
</dbReference>
<dbReference type="GO" id="GO:0003677">
    <property type="term" value="F:DNA binding"/>
    <property type="evidence" value="ECO:0007669"/>
    <property type="project" value="InterPro"/>
</dbReference>
<dbReference type="GO" id="GO:0009439">
    <property type="term" value="P:cyanate metabolic process"/>
    <property type="evidence" value="ECO:0007669"/>
    <property type="project" value="UniProtKB-UniRule"/>
</dbReference>
<dbReference type="CDD" id="cd00559">
    <property type="entry name" value="Cyanase_C"/>
    <property type="match status" value="1"/>
</dbReference>
<dbReference type="Gene3D" id="3.30.1160.10">
    <property type="entry name" value="Cyanate lyase, C-terminal domain"/>
    <property type="match status" value="1"/>
</dbReference>
<dbReference type="Gene3D" id="1.10.260.40">
    <property type="entry name" value="lambda repressor-like DNA-binding domains"/>
    <property type="match status" value="1"/>
</dbReference>
<dbReference type="HAMAP" id="MF_00535">
    <property type="entry name" value="Cyanate_hydrat"/>
    <property type="match status" value="1"/>
</dbReference>
<dbReference type="InterPro" id="IPR008076">
    <property type="entry name" value="Cyanase"/>
</dbReference>
<dbReference type="InterPro" id="IPR003712">
    <property type="entry name" value="Cyanate_lyase_C"/>
</dbReference>
<dbReference type="InterPro" id="IPR036581">
    <property type="entry name" value="Cyanate_lyase_C_sf"/>
</dbReference>
<dbReference type="InterPro" id="IPR048564">
    <property type="entry name" value="CYNS_N"/>
</dbReference>
<dbReference type="InterPro" id="IPR010982">
    <property type="entry name" value="Lambda_DNA-bd_dom_sf"/>
</dbReference>
<dbReference type="NCBIfam" id="TIGR00673">
    <property type="entry name" value="cynS"/>
    <property type="match status" value="1"/>
</dbReference>
<dbReference type="NCBIfam" id="NF002773">
    <property type="entry name" value="PRK02866.1"/>
    <property type="match status" value="1"/>
</dbReference>
<dbReference type="PANTHER" id="PTHR34186">
    <property type="entry name" value="CYANATE HYDRATASE"/>
    <property type="match status" value="1"/>
</dbReference>
<dbReference type="PANTHER" id="PTHR34186:SF2">
    <property type="entry name" value="CYANATE HYDRATASE"/>
    <property type="match status" value="1"/>
</dbReference>
<dbReference type="Pfam" id="PF02560">
    <property type="entry name" value="Cyanate_lyase"/>
    <property type="match status" value="1"/>
</dbReference>
<dbReference type="Pfam" id="PF21291">
    <property type="entry name" value="CYNS_N"/>
    <property type="match status" value="1"/>
</dbReference>
<dbReference type="PIRSF" id="PIRSF001263">
    <property type="entry name" value="Cyanate_hydratas"/>
    <property type="match status" value="1"/>
</dbReference>
<dbReference type="PRINTS" id="PR01693">
    <property type="entry name" value="CYANASE"/>
</dbReference>
<dbReference type="SMART" id="SM01116">
    <property type="entry name" value="Cyanate_lyase"/>
    <property type="match status" value="1"/>
</dbReference>
<dbReference type="SUPFAM" id="SSF55234">
    <property type="entry name" value="Cyanase C-terminal domain"/>
    <property type="match status" value="1"/>
</dbReference>
<dbReference type="SUPFAM" id="SSF47413">
    <property type="entry name" value="lambda repressor-like DNA-binding domains"/>
    <property type="match status" value="1"/>
</dbReference>